<protein>
    <recommendedName>
        <fullName>Sporulation integral membrane protein YlbJ</fullName>
    </recommendedName>
</protein>
<reference key="1">
    <citation type="submission" date="1997-08" db="EMBL/GenBank/DDBJ databases">
        <title>Bacillus subtilis chromosomal region downstream nprE.</title>
        <authorList>
            <person name="Bertero M."/>
            <person name="Presecan E."/>
            <person name="Glaser P."/>
            <person name="Richou A."/>
            <person name="Danchin A."/>
        </authorList>
    </citation>
    <scope>NUCLEOTIDE SEQUENCE [GENOMIC DNA]</scope>
    <source>
        <strain>168</strain>
    </source>
</reference>
<reference key="2">
    <citation type="journal article" date="1997" name="Nature">
        <title>The complete genome sequence of the Gram-positive bacterium Bacillus subtilis.</title>
        <authorList>
            <person name="Kunst F."/>
            <person name="Ogasawara N."/>
            <person name="Moszer I."/>
            <person name="Albertini A.M."/>
            <person name="Alloni G."/>
            <person name="Azevedo V."/>
            <person name="Bertero M.G."/>
            <person name="Bessieres P."/>
            <person name="Bolotin A."/>
            <person name="Borchert S."/>
            <person name="Borriss R."/>
            <person name="Boursier L."/>
            <person name="Brans A."/>
            <person name="Braun M."/>
            <person name="Brignell S.C."/>
            <person name="Bron S."/>
            <person name="Brouillet S."/>
            <person name="Bruschi C.V."/>
            <person name="Caldwell B."/>
            <person name="Capuano V."/>
            <person name="Carter N.M."/>
            <person name="Choi S.-K."/>
            <person name="Codani J.-J."/>
            <person name="Connerton I.F."/>
            <person name="Cummings N.J."/>
            <person name="Daniel R.A."/>
            <person name="Denizot F."/>
            <person name="Devine K.M."/>
            <person name="Duesterhoeft A."/>
            <person name="Ehrlich S.D."/>
            <person name="Emmerson P.T."/>
            <person name="Entian K.-D."/>
            <person name="Errington J."/>
            <person name="Fabret C."/>
            <person name="Ferrari E."/>
            <person name="Foulger D."/>
            <person name="Fritz C."/>
            <person name="Fujita M."/>
            <person name="Fujita Y."/>
            <person name="Fuma S."/>
            <person name="Galizzi A."/>
            <person name="Galleron N."/>
            <person name="Ghim S.-Y."/>
            <person name="Glaser P."/>
            <person name="Goffeau A."/>
            <person name="Golightly E.J."/>
            <person name="Grandi G."/>
            <person name="Guiseppi G."/>
            <person name="Guy B.J."/>
            <person name="Haga K."/>
            <person name="Haiech J."/>
            <person name="Harwood C.R."/>
            <person name="Henaut A."/>
            <person name="Hilbert H."/>
            <person name="Holsappel S."/>
            <person name="Hosono S."/>
            <person name="Hullo M.-F."/>
            <person name="Itaya M."/>
            <person name="Jones L.-M."/>
            <person name="Joris B."/>
            <person name="Karamata D."/>
            <person name="Kasahara Y."/>
            <person name="Klaerr-Blanchard M."/>
            <person name="Klein C."/>
            <person name="Kobayashi Y."/>
            <person name="Koetter P."/>
            <person name="Koningstein G."/>
            <person name="Krogh S."/>
            <person name="Kumano M."/>
            <person name="Kurita K."/>
            <person name="Lapidus A."/>
            <person name="Lardinois S."/>
            <person name="Lauber J."/>
            <person name="Lazarevic V."/>
            <person name="Lee S.-M."/>
            <person name="Levine A."/>
            <person name="Liu H."/>
            <person name="Masuda S."/>
            <person name="Mauel C."/>
            <person name="Medigue C."/>
            <person name="Medina N."/>
            <person name="Mellado R.P."/>
            <person name="Mizuno M."/>
            <person name="Moestl D."/>
            <person name="Nakai S."/>
            <person name="Noback M."/>
            <person name="Noone D."/>
            <person name="O'Reilly M."/>
            <person name="Ogawa K."/>
            <person name="Ogiwara A."/>
            <person name="Oudega B."/>
            <person name="Park S.-H."/>
            <person name="Parro V."/>
            <person name="Pohl T.M."/>
            <person name="Portetelle D."/>
            <person name="Porwollik S."/>
            <person name="Prescott A.M."/>
            <person name="Presecan E."/>
            <person name="Pujic P."/>
            <person name="Purnelle B."/>
            <person name="Rapoport G."/>
            <person name="Rey M."/>
            <person name="Reynolds S."/>
            <person name="Rieger M."/>
            <person name="Rivolta C."/>
            <person name="Rocha E."/>
            <person name="Roche B."/>
            <person name="Rose M."/>
            <person name="Sadaie Y."/>
            <person name="Sato T."/>
            <person name="Scanlan E."/>
            <person name="Schleich S."/>
            <person name="Schroeter R."/>
            <person name="Scoffone F."/>
            <person name="Sekiguchi J."/>
            <person name="Sekowska A."/>
            <person name="Seror S.J."/>
            <person name="Serror P."/>
            <person name="Shin B.-S."/>
            <person name="Soldo B."/>
            <person name="Sorokin A."/>
            <person name="Tacconi E."/>
            <person name="Takagi T."/>
            <person name="Takahashi H."/>
            <person name="Takemaru K."/>
            <person name="Takeuchi M."/>
            <person name="Tamakoshi A."/>
            <person name="Tanaka T."/>
            <person name="Terpstra P."/>
            <person name="Tognoni A."/>
            <person name="Tosato V."/>
            <person name="Uchiyama S."/>
            <person name="Vandenbol M."/>
            <person name="Vannier F."/>
            <person name="Vassarotti A."/>
            <person name="Viari A."/>
            <person name="Wambutt R."/>
            <person name="Wedler E."/>
            <person name="Wedler H."/>
            <person name="Weitzenegger T."/>
            <person name="Winters P."/>
            <person name="Wipat A."/>
            <person name="Yamamoto H."/>
            <person name="Yamane K."/>
            <person name="Yasumoto K."/>
            <person name="Yata K."/>
            <person name="Yoshida K."/>
            <person name="Yoshikawa H.-F."/>
            <person name="Zumstein E."/>
            <person name="Yoshikawa H."/>
            <person name="Danchin A."/>
        </authorList>
    </citation>
    <scope>NUCLEOTIDE SEQUENCE [LARGE SCALE GENOMIC DNA]</scope>
    <source>
        <strain>168</strain>
    </source>
</reference>
<reference key="3">
    <citation type="journal article" date="2003" name="J. Mol. Biol.">
        <title>The sigmaE regulon and the identification of additional sporulation genes in Bacillus subtilis.</title>
        <authorList>
            <person name="Eichenberger P."/>
            <person name="Jensen S.T."/>
            <person name="Conlon E.M."/>
            <person name="van Ooij C."/>
            <person name="Silvaggi J."/>
            <person name="Gonzalez-Pastor J.-E."/>
            <person name="Fujita M."/>
            <person name="Ben-Yehuda S."/>
            <person name="Stragier P."/>
            <person name="Liu J.S."/>
            <person name="Losick R."/>
        </authorList>
    </citation>
    <scope>FUNCTION</scope>
    <scope>INDUCTION</scope>
</reference>
<sequence length="408" mass="44838">MNLSKINTLLIASFFLFLTATVISHPQASFEASKTGLSMWWEVVFPSLLPFFILSELLIGFGIVRFVGVLLEPFMRPIFRVPGVGGFVLAMGMASGNPAGAKLTARLRQENQISRVEAERLASFTNSSNPLFIFGAVAVGFFQNASLGILLASAHYLGNLAVGLTMRSYGRKEEQHLRRKKTIPFPSVKDALHALHTARLAEKRPLGKILGDAVTSSVQTLLMVGGFIILFSVFNRLLSVVQLTDVLSVFTKGALTLFQLPTQLDIPLLSGMFEITLGSKLVSETDVSLLQKAIIVSFILGFSGFSVQAQVAGILSETDIRFKPFFIARLLQGVYAAVFVMLLWKPLYTAWHDPYQYVFKSLNSSDMSTAFINGWNLLVQIGPAVTLCALFTYIIIFSYRLTNGTKKG</sequence>
<keyword id="KW-1003">Cell membrane</keyword>
<keyword id="KW-0472">Membrane</keyword>
<keyword id="KW-1185">Reference proteome</keyword>
<keyword id="KW-0749">Sporulation</keyword>
<keyword id="KW-0812">Transmembrane</keyword>
<keyword id="KW-1133">Transmembrane helix</keyword>
<accession>O34765</accession>
<accession>Q797T1</accession>
<dbReference type="EMBL" id="Z98682">
    <property type="protein sequence ID" value="CAB11356.1"/>
    <property type="molecule type" value="Genomic_DNA"/>
</dbReference>
<dbReference type="EMBL" id="AL009126">
    <property type="protein sequence ID" value="CAB13376.1"/>
    <property type="molecule type" value="Genomic_DNA"/>
</dbReference>
<dbReference type="PIR" id="G69874">
    <property type="entry name" value="G69874"/>
</dbReference>
<dbReference type="FunCoup" id="O34765">
    <property type="interactions" value="70"/>
</dbReference>
<dbReference type="STRING" id="224308.BSU15030"/>
<dbReference type="TCDB" id="9.A.5.3.2">
    <property type="family name" value="the putative arginine transporter (argw) family"/>
</dbReference>
<dbReference type="PaxDb" id="224308-BSU15030"/>
<dbReference type="EnsemblBacteria" id="CAB13376">
    <property type="protein sequence ID" value="CAB13376"/>
    <property type="gene ID" value="BSU_15030"/>
</dbReference>
<dbReference type="GeneID" id="936629"/>
<dbReference type="KEGG" id="bsu:BSU15030"/>
<dbReference type="PATRIC" id="fig|224308.179.peg.1638"/>
<dbReference type="eggNOG" id="COG3314">
    <property type="taxonomic scope" value="Bacteria"/>
</dbReference>
<dbReference type="InParanoid" id="O34765"/>
<dbReference type="OrthoDB" id="1645614at2"/>
<dbReference type="PhylomeDB" id="O34765"/>
<dbReference type="BioCyc" id="BSUB:BSU15030-MONOMER"/>
<dbReference type="Proteomes" id="UP000001570">
    <property type="component" value="Chromosome"/>
</dbReference>
<dbReference type="GO" id="GO:0005886">
    <property type="term" value="C:plasma membrane"/>
    <property type="evidence" value="ECO:0007669"/>
    <property type="project" value="UniProtKB-SubCell"/>
</dbReference>
<dbReference type="GO" id="GO:0030435">
    <property type="term" value="P:sporulation resulting in formation of a cellular spore"/>
    <property type="evidence" value="ECO:0007669"/>
    <property type="project" value="UniProtKB-KW"/>
</dbReference>
<dbReference type="InterPro" id="IPR011642">
    <property type="entry name" value="Gate_dom"/>
</dbReference>
<dbReference type="InterPro" id="IPR014226">
    <property type="entry name" value="Spore_IM_YlbJ"/>
</dbReference>
<dbReference type="NCBIfam" id="TIGR02871">
    <property type="entry name" value="spore_ylbJ"/>
    <property type="match status" value="1"/>
</dbReference>
<dbReference type="Pfam" id="PF07670">
    <property type="entry name" value="Gate"/>
    <property type="match status" value="2"/>
</dbReference>
<organism>
    <name type="scientific">Bacillus subtilis (strain 168)</name>
    <dbReference type="NCBI Taxonomy" id="224308"/>
    <lineage>
        <taxon>Bacteria</taxon>
        <taxon>Bacillati</taxon>
        <taxon>Bacillota</taxon>
        <taxon>Bacilli</taxon>
        <taxon>Bacillales</taxon>
        <taxon>Bacillaceae</taxon>
        <taxon>Bacillus</taxon>
    </lineage>
</organism>
<proteinExistence type="evidence at transcript level"/>
<evidence type="ECO:0000255" key="1"/>
<evidence type="ECO:0000269" key="2">
    <source>
    </source>
</evidence>
<evidence type="ECO:0000305" key="3"/>
<gene>
    <name type="primary">ylbJ</name>
    <name type="ordered locus">BSU15030</name>
</gene>
<feature type="chain" id="PRO_0000360445" description="Sporulation integral membrane protein YlbJ">
    <location>
        <begin position="1"/>
        <end position="408"/>
    </location>
</feature>
<feature type="transmembrane region" description="Helical" evidence="1">
    <location>
        <begin position="6"/>
        <end position="26"/>
    </location>
</feature>
<feature type="transmembrane region" description="Helical" evidence="1">
    <location>
        <begin position="43"/>
        <end position="63"/>
    </location>
</feature>
<feature type="transmembrane region" description="Helical" evidence="1">
    <location>
        <begin position="81"/>
        <end position="101"/>
    </location>
</feature>
<feature type="transmembrane region" description="Helical" evidence="1">
    <location>
        <begin position="131"/>
        <end position="151"/>
    </location>
</feature>
<feature type="transmembrane region" description="Helical" evidence="1">
    <location>
        <begin position="214"/>
        <end position="234"/>
    </location>
</feature>
<feature type="transmembrane region" description="Helical" evidence="1">
    <location>
        <begin position="294"/>
        <end position="314"/>
    </location>
</feature>
<feature type="transmembrane region" description="Helical" evidence="1">
    <location>
        <begin position="324"/>
        <end position="344"/>
    </location>
</feature>
<feature type="transmembrane region" description="Helical" evidence="1">
    <location>
        <begin position="377"/>
        <end position="397"/>
    </location>
</feature>
<name>YLBJ_BACSU</name>
<comment type="function">
    <text evidence="2">Required for spore cortex formation.</text>
</comment>
<comment type="subcellular location">
    <subcellularLocation>
        <location evidence="3">Cell membrane</location>
        <topology evidence="3">Multi-pass membrane protein</topology>
    </subcellularLocation>
</comment>
<comment type="induction">
    <text evidence="2">Expression is controlled by a sigma-E-regulated promoter which needs the sigma-E factor for the binding of the RNA polymerase and subsequent transcription.</text>
</comment>